<comment type="function">
    <text evidence="1">May help in the organization of the PsaE and PsaF subunits.</text>
</comment>
<comment type="subcellular location">
    <subcellularLocation>
        <location evidence="1">Plastid</location>
        <location evidence="1">Chloroplast thylakoid membrane</location>
        <topology evidence="1">Single-pass membrane protein</topology>
    </subcellularLocation>
</comment>
<comment type="similarity">
    <text evidence="1">Belongs to the PsaJ family.</text>
</comment>
<dbReference type="EMBL" id="AY958086">
    <property type="protein sequence ID" value="AAX45834.1"/>
    <property type="molecule type" value="Genomic_DNA"/>
</dbReference>
<dbReference type="RefSeq" id="YP_636551.1">
    <property type="nucleotide sequence ID" value="NC_008117.1"/>
</dbReference>
<dbReference type="SMR" id="Q32RH5"/>
<dbReference type="GeneID" id="4108154"/>
<dbReference type="GO" id="GO:0009535">
    <property type="term" value="C:chloroplast thylakoid membrane"/>
    <property type="evidence" value="ECO:0007669"/>
    <property type="project" value="UniProtKB-SubCell"/>
</dbReference>
<dbReference type="GO" id="GO:0009522">
    <property type="term" value="C:photosystem I"/>
    <property type="evidence" value="ECO:0007669"/>
    <property type="project" value="UniProtKB-KW"/>
</dbReference>
<dbReference type="GO" id="GO:0015979">
    <property type="term" value="P:photosynthesis"/>
    <property type="evidence" value="ECO:0007669"/>
    <property type="project" value="UniProtKB-UniRule"/>
</dbReference>
<dbReference type="Gene3D" id="1.20.5.510">
    <property type="entry name" value="Single helix bin"/>
    <property type="match status" value="1"/>
</dbReference>
<dbReference type="HAMAP" id="MF_00522">
    <property type="entry name" value="PSI_PsaJ"/>
    <property type="match status" value="1"/>
</dbReference>
<dbReference type="InterPro" id="IPR002615">
    <property type="entry name" value="PSI_PsaJ"/>
</dbReference>
<dbReference type="InterPro" id="IPR036062">
    <property type="entry name" value="PSI_PsaJ_sf"/>
</dbReference>
<dbReference type="PANTHER" id="PTHR36082">
    <property type="match status" value="1"/>
</dbReference>
<dbReference type="PANTHER" id="PTHR36082:SF2">
    <property type="entry name" value="PHOTOSYSTEM I REACTION CENTER SUBUNIT IX"/>
    <property type="match status" value="1"/>
</dbReference>
<dbReference type="Pfam" id="PF01701">
    <property type="entry name" value="PSI_PsaJ"/>
    <property type="match status" value="1"/>
</dbReference>
<dbReference type="SUPFAM" id="SSF81544">
    <property type="entry name" value="Subunit IX of photosystem I reaction centre, PsaJ"/>
    <property type="match status" value="1"/>
</dbReference>
<keyword id="KW-0150">Chloroplast</keyword>
<keyword id="KW-0472">Membrane</keyword>
<keyword id="KW-0602">Photosynthesis</keyword>
<keyword id="KW-0603">Photosystem I</keyword>
<keyword id="KW-0934">Plastid</keyword>
<keyword id="KW-0793">Thylakoid</keyword>
<keyword id="KW-0812">Transmembrane</keyword>
<keyword id="KW-1133">Transmembrane helix</keyword>
<feature type="chain" id="PRO_0000276082" description="Photosystem I reaction center subunit IX">
    <location>
        <begin position="1"/>
        <end position="42"/>
    </location>
</feature>
<feature type="transmembrane region" description="Helical" evidence="1">
    <location>
        <begin position="7"/>
        <end position="27"/>
    </location>
</feature>
<name>PSAJ_ZYGCR</name>
<gene>
    <name evidence="1" type="primary">psaJ</name>
</gene>
<protein>
    <recommendedName>
        <fullName evidence="1">Photosystem I reaction center subunit IX</fullName>
    </recommendedName>
    <alternativeName>
        <fullName evidence="1">PSI-J</fullName>
    </alternativeName>
</protein>
<reference key="1">
    <citation type="journal article" date="2005" name="BMC Biol.">
        <title>The complete chloroplast DNA sequences of the charophycean green algae Staurastrum and Zygnema reveal that the chloroplast genome underwent extensive changes during the evolution of the Zygnematales.</title>
        <authorList>
            <person name="Turmel M."/>
            <person name="Otis C."/>
            <person name="Lemieux C."/>
        </authorList>
    </citation>
    <scope>NUCLEOTIDE SEQUENCE [LARGE SCALE GENOMIC DNA]</scope>
</reference>
<organism>
    <name type="scientific">Zygnema circumcarinatum</name>
    <name type="common">Green alga</name>
    <dbReference type="NCBI Taxonomy" id="35869"/>
    <lineage>
        <taxon>Eukaryota</taxon>
        <taxon>Viridiplantae</taxon>
        <taxon>Streptophyta</taxon>
        <taxon>Zygnematophyceae</taxon>
        <taxon>Zygnematophycidae</taxon>
        <taxon>Zygnematales</taxon>
        <taxon>Zygnemataceae</taxon>
        <taxon>Zygnema</taxon>
    </lineage>
</organism>
<proteinExistence type="inferred from homology"/>
<accession>Q32RH5</accession>
<evidence type="ECO:0000255" key="1">
    <source>
        <dbReference type="HAMAP-Rule" id="MF_00522"/>
    </source>
</evidence>
<sequence>MQYVKTYLSTAPVLAAIWFAILAGLLIEINRFFPDALILPYV</sequence>
<geneLocation type="chloroplast"/>